<accession>Q7KMJ6</accession>
<accession>Q8T0B2</accession>
<protein>
    <recommendedName>
        <fullName evidence="12">RNA-binding protein spenito</fullName>
    </recommendedName>
</protein>
<comment type="function">
    <text evidence="4 5 7 8 10 11">RNA-binding protein that acts as an associated component of the WMM complex, a complex that mediates N6-methyladenosine (m6A) methylation of mRNAs (PubMed:27919077, PubMed:29535189, PubMed:29555755). M6a modification plays a role in the efficiency of mRNA splicing and is required for sex determination (PubMed:27919077, PubMed:29535189, PubMed:29555755). In the WMM complex, may act by binding target RNAs and recruiting the WMM complex (PubMed:29535189). Required for sex determination and dosage compensation via Sxl alternative splicing: m6A methylation acts as a key regulator of Sxl pre-mRNA and promotes female-specific alternative splicing of Sxl, which determines female physiognomy (PubMed:26324914, PubMed:29535189, PubMed:29555755). M6A methylation is also required for neuronal functions (PubMed:27919077). Acts as a positive regulator of canonical Wg signaling during wing disk and eye development (PubMed:16547102, PubMed:18174108).</text>
</comment>
<comment type="subunit">
    <text evidence="6 7 8 9 10 11">Component of the WMM complex, a N6-methyltransferase complex composed of a catalytic subcomplex, named MAC, and of an associated subcomplex, named MACOM (PubMed:27919077, PubMed:28675155, PubMed:29535189, PubMed:29555755). The MAC subcomplex is composed of Ime4/Mettl3 and Mettl14 (PubMed:27919077, PubMed:28675155, PubMed:29535189, PubMed:29555755). The MACOM subcomplex is composed of fl(2)d, Flacc/Xio, Hakai, vir, and, in some cases of nito (PubMed:27919077, PubMed:29535189, PubMed:29555755). Interacts with Sxl (PubMed:26324914). Interacts with Hipk; leading to phosphorylation (PubMed:25040100).</text>
</comment>
<comment type="subcellular location">
    <subcellularLocation>
        <location evidence="5 7 9">Nucleus</location>
    </subcellularLocation>
</comment>
<comment type="tissue specificity">
    <text evidence="5 6">Widely expressed (PubMed:18174108, PubMed:25040100). Shows some enrichment in the central nervous system (PubMed:25040100).</text>
</comment>
<comment type="PTM">
    <text evidence="6">Phosphorylated by Hipk at Ser-23, Ser-25 and/or Ser-27; the precise position if phosphorylation sites is unknown (PubMed:25040100).</text>
</comment>
<comment type="disruption phenotype">
    <text evidence="7">Female flies show stem cell tumors in the female germ line as well as female-to-male somatic transformations (PubMed:26324914).</text>
</comment>
<comment type="similarity">
    <text evidence="12">Belongs to the RRM Spen family.</text>
</comment>
<comment type="sequence caution" evidence="12">
    <conflict type="erroneous initiation">
        <sequence resource="EMBL-CDS" id="AAL39579"/>
    </conflict>
    <text>Truncated N-terminus.</text>
</comment>
<proteinExistence type="evidence at protein level"/>
<sequence length="793" mass="89053">MSSHRDGAGADRITIKIHNMKRSASRSPGPASRSSLSRNSRSMGRGYDNGSGVPGDSPERLSPERMRRRLDRSPSRYGSPHREPYMRGPPPAERPAGYKVLCVSALPPKAPDDFIEETLYREYKKFGDFSVRLAHDLDERVAYVCFRTPEDAREAKHHKPRLIIYDKMAIVEPVYKSTTRPEYRPRGHSMSPPDYERYHYSRSPMGQGVPLDHRRPPIDPYDRYGPPHMHPHAVHPRDYRPLHHDYPHPPRGPPLHRGGHPHHLHGHAPPHQYAPMRPLAPRPHAPYEKPESKKDKFPNYLHHVQPEDDPLSTRTLFAGNLEVTIADDELRRIFGKYGVVDDIDIKRPPPGTGNAFAFVRYQNLDMAHRAKIELSGQYIGKFQCKIGYGKVTPATRMWIGGLGAWTSVTQLEREFDRFGAIKKIEYQKGEPYAYIQYETVEAATAAVKEMRGFPLGGPERRLRTDFAELPGATPAAPFKSSKPPYDESALEYRRPEYDPYYEESAAYAPRGGYSPYPPRGGYRGRGGYRGRGRGMYHYHNDVHRPPHPGSLAGSSSSVPPPGGVEDEWRRPPGESYDRGARSSSREPGVERSRSRSPLKRARSPGSDSDTSTRRNDALASASTVPDVARKCSTVWTGALILKSSLFPAKFHLTDGDTDIVESLMRDEEGKHNLRITQRLRLDPPKLDDVQKRIASSSSHAIFMGLAGSTNDTNCDDASVQTRPLRNLVSYLKQKEAAGVISLLNKETEATGVLYAFPPCDFSTELLKRTCHSLTEEGLKEDHLVIVVVRGGTA</sequence>
<reference key="1">
    <citation type="journal article" date="2000" name="Science">
        <title>The genome sequence of Drosophila melanogaster.</title>
        <authorList>
            <person name="Adams M.D."/>
            <person name="Celniker S.E."/>
            <person name="Holt R.A."/>
            <person name="Evans C.A."/>
            <person name="Gocayne J.D."/>
            <person name="Amanatides P.G."/>
            <person name="Scherer S.E."/>
            <person name="Li P.W."/>
            <person name="Hoskins R.A."/>
            <person name="Galle R.F."/>
            <person name="George R.A."/>
            <person name="Lewis S.E."/>
            <person name="Richards S."/>
            <person name="Ashburner M."/>
            <person name="Henderson S.N."/>
            <person name="Sutton G.G."/>
            <person name="Wortman J.R."/>
            <person name="Yandell M.D."/>
            <person name="Zhang Q."/>
            <person name="Chen L.X."/>
            <person name="Brandon R.C."/>
            <person name="Rogers Y.-H.C."/>
            <person name="Blazej R.G."/>
            <person name="Champe M."/>
            <person name="Pfeiffer B.D."/>
            <person name="Wan K.H."/>
            <person name="Doyle C."/>
            <person name="Baxter E.G."/>
            <person name="Helt G."/>
            <person name="Nelson C.R."/>
            <person name="Miklos G.L.G."/>
            <person name="Abril J.F."/>
            <person name="Agbayani A."/>
            <person name="An H.-J."/>
            <person name="Andrews-Pfannkoch C."/>
            <person name="Baldwin D."/>
            <person name="Ballew R.M."/>
            <person name="Basu A."/>
            <person name="Baxendale J."/>
            <person name="Bayraktaroglu L."/>
            <person name="Beasley E.M."/>
            <person name="Beeson K.Y."/>
            <person name="Benos P.V."/>
            <person name="Berman B.P."/>
            <person name="Bhandari D."/>
            <person name="Bolshakov S."/>
            <person name="Borkova D."/>
            <person name="Botchan M.R."/>
            <person name="Bouck J."/>
            <person name="Brokstein P."/>
            <person name="Brottier P."/>
            <person name="Burtis K.C."/>
            <person name="Busam D.A."/>
            <person name="Butler H."/>
            <person name="Cadieu E."/>
            <person name="Center A."/>
            <person name="Chandra I."/>
            <person name="Cherry J.M."/>
            <person name="Cawley S."/>
            <person name="Dahlke C."/>
            <person name="Davenport L.B."/>
            <person name="Davies P."/>
            <person name="de Pablos B."/>
            <person name="Delcher A."/>
            <person name="Deng Z."/>
            <person name="Mays A.D."/>
            <person name="Dew I."/>
            <person name="Dietz S.M."/>
            <person name="Dodson K."/>
            <person name="Doup L.E."/>
            <person name="Downes M."/>
            <person name="Dugan-Rocha S."/>
            <person name="Dunkov B.C."/>
            <person name="Dunn P."/>
            <person name="Durbin K.J."/>
            <person name="Evangelista C.C."/>
            <person name="Ferraz C."/>
            <person name="Ferriera S."/>
            <person name="Fleischmann W."/>
            <person name="Fosler C."/>
            <person name="Gabrielian A.E."/>
            <person name="Garg N.S."/>
            <person name="Gelbart W.M."/>
            <person name="Glasser K."/>
            <person name="Glodek A."/>
            <person name="Gong F."/>
            <person name="Gorrell J.H."/>
            <person name="Gu Z."/>
            <person name="Guan P."/>
            <person name="Harris M."/>
            <person name="Harris N.L."/>
            <person name="Harvey D.A."/>
            <person name="Heiman T.J."/>
            <person name="Hernandez J.R."/>
            <person name="Houck J."/>
            <person name="Hostin D."/>
            <person name="Houston K.A."/>
            <person name="Howland T.J."/>
            <person name="Wei M.-H."/>
            <person name="Ibegwam C."/>
            <person name="Jalali M."/>
            <person name="Kalush F."/>
            <person name="Karpen G.H."/>
            <person name="Ke Z."/>
            <person name="Kennison J.A."/>
            <person name="Ketchum K.A."/>
            <person name="Kimmel B.E."/>
            <person name="Kodira C.D."/>
            <person name="Kraft C.L."/>
            <person name="Kravitz S."/>
            <person name="Kulp D."/>
            <person name="Lai Z."/>
            <person name="Lasko P."/>
            <person name="Lei Y."/>
            <person name="Levitsky A.A."/>
            <person name="Li J.H."/>
            <person name="Li Z."/>
            <person name="Liang Y."/>
            <person name="Lin X."/>
            <person name="Liu X."/>
            <person name="Mattei B."/>
            <person name="McIntosh T.C."/>
            <person name="McLeod M.P."/>
            <person name="McPherson D."/>
            <person name="Merkulov G."/>
            <person name="Milshina N.V."/>
            <person name="Mobarry C."/>
            <person name="Morris J."/>
            <person name="Moshrefi A."/>
            <person name="Mount S.M."/>
            <person name="Moy M."/>
            <person name="Murphy B."/>
            <person name="Murphy L."/>
            <person name="Muzny D.M."/>
            <person name="Nelson D.L."/>
            <person name="Nelson D.R."/>
            <person name="Nelson K.A."/>
            <person name="Nixon K."/>
            <person name="Nusskern D.R."/>
            <person name="Pacleb J.M."/>
            <person name="Palazzolo M."/>
            <person name="Pittman G.S."/>
            <person name="Pan S."/>
            <person name="Pollard J."/>
            <person name="Puri V."/>
            <person name="Reese M.G."/>
            <person name="Reinert K."/>
            <person name="Remington K."/>
            <person name="Saunders R.D.C."/>
            <person name="Scheeler F."/>
            <person name="Shen H."/>
            <person name="Shue B.C."/>
            <person name="Siden-Kiamos I."/>
            <person name="Simpson M."/>
            <person name="Skupski M.P."/>
            <person name="Smith T.J."/>
            <person name="Spier E."/>
            <person name="Spradling A.C."/>
            <person name="Stapleton M."/>
            <person name="Strong R."/>
            <person name="Sun E."/>
            <person name="Svirskas R."/>
            <person name="Tector C."/>
            <person name="Turner R."/>
            <person name="Venter E."/>
            <person name="Wang A.H."/>
            <person name="Wang X."/>
            <person name="Wang Z.-Y."/>
            <person name="Wassarman D.A."/>
            <person name="Weinstock G.M."/>
            <person name="Weissenbach J."/>
            <person name="Williams S.M."/>
            <person name="Woodage T."/>
            <person name="Worley K.C."/>
            <person name="Wu D."/>
            <person name="Yang S."/>
            <person name="Yao Q.A."/>
            <person name="Ye J."/>
            <person name="Yeh R.-F."/>
            <person name="Zaveri J.S."/>
            <person name="Zhan M."/>
            <person name="Zhang G."/>
            <person name="Zhao Q."/>
            <person name="Zheng L."/>
            <person name="Zheng X.H."/>
            <person name="Zhong F.N."/>
            <person name="Zhong W."/>
            <person name="Zhou X."/>
            <person name="Zhu S.C."/>
            <person name="Zhu X."/>
            <person name="Smith H.O."/>
            <person name="Gibbs R.A."/>
            <person name="Myers E.W."/>
            <person name="Rubin G.M."/>
            <person name="Venter J.C."/>
        </authorList>
    </citation>
    <scope>NUCLEOTIDE SEQUENCE [LARGE SCALE GENOMIC DNA]</scope>
    <source>
        <strain>Berkeley</strain>
    </source>
</reference>
<reference key="2">
    <citation type="journal article" date="2002" name="Genome Biol.">
        <title>Annotation of the Drosophila melanogaster euchromatic genome: a systematic review.</title>
        <authorList>
            <person name="Misra S."/>
            <person name="Crosby M.A."/>
            <person name="Mungall C.J."/>
            <person name="Matthews B.B."/>
            <person name="Campbell K.S."/>
            <person name="Hradecky P."/>
            <person name="Huang Y."/>
            <person name="Kaminker J.S."/>
            <person name="Millburn G.H."/>
            <person name="Prochnik S.E."/>
            <person name="Smith C.D."/>
            <person name="Tupy J.L."/>
            <person name="Whitfield E.J."/>
            <person name="Bayraktaroglu L."/>
            <person name="Berman B.P."/>
            <person name="Bettencourt B.R."/>
            <person name="Celniker S.E."/>
            <person name="de Grey A.D.N.J."/>
            <person name="Drysdale R.A."/>
            <person name="Harris N.L."/>
            <person name="Richter J."/>
            <person name="Russo S."/>
            <person name="Schroeder A.J."/>
            <person name="Shu S.Q."/>
            <person name="Stapleton M."/>
            <person name="Yamada C."/>
            <person name="Ashburner M."/>
            <person name="Gelbart W.M."/>
            <person name="Rubin G.M."/>
            <person name="Lewis S.E."/>
        </authorList>
    </citation>
    <scope>GENOME REANNOTATION</scope>
    <source>
        <strain>Berkeley</strain>
    </source>
</reference>
<reference key="3">
    <citation type="journal article" date="2002" name="Genome Biol.">
        <title>A Drosophila full-length cDNA resource.</title>
        <authorList>
            <person name="Stapleton M."/>
            <person name="Carlson J.W."/>
            <person name="Brokstein P."/>
            <person name="Yu C."/>
            <person name="Champe M."/>
            <person name="George R.A."/>
            <person name="Guarin H."/>
            <person name="Kronmiller B."/>
            <person name="Pacleb J.M."/>
            <person name="Park S."/>
            <person name="Wan K.H."/>
            <person name="Rubin G.M."/>
            <person name="Celniker S.E."/>
        </authorList>
    </citation>
    <scope>NUCLEOTIDE SEQUENCE [LARGE SCALE MRNA]</scope>
    <source>
        <strain>Berkeley</strain>
        <tissue>Embryo</tissue>
        <tissue>Head</tissue>
    </source>
</reference>
<reference key="4">
    <citation type="journal article" date="2006" name="Genetics">
        <title>Characterization of the split ends-like gene spenito reveals functional antagonism between SPOC family members during Drosophila eye development.</title>
        <authorList>
            <person name="Jemc J."/>
            <person name="Rebay I."/>
        </authorList>
    </citation>
    <scope>FUNCTION</scope>
</reference>
<reference key="5">
    <citation type="journal article" date="2008" name="Dev. Biol.">
        <title>Spenito and Split ends act redundantly to promote Wingless signaling.</title>
        <authorList>
            <person name="Chang J.L."/>
            <person name="Lin H.V."/>
            <person name="Blauwkamp T.A."/>
            <person name="Cadigan K.M."/>
        </authorList>
    </citation>
    <scope>FUNCTION</scope>
    <scope>SUBCELLULAR LOCATION</scope>
    <scope>TISSUE SPECIFICITY</scope>
</reference>
<reference key="6">
    <citation type="journal article" date="2014" name="Insect Mol. Biol.">
        <title>Homeodomain-interacting protein kinase (Hipk) phosphorylates the small SPOC family protein Spenito.</title>
        <authorList>
            <person name="Dewald D.N."/>
            <person name="Steinmetz E.L."/>
            <person name="Walldorf U."/>
        </authorList>
    </citation>
    <scope>TISSUE SPECIFICITY</scope>
    <scope>PHOSPHORYLATION</scope>
    <scope>INTERACTION WITH HIPK</scope>
    <scope>MUTAGENESIS OF 23-SER--SER-27 AND 32-SER--SER-37</scope>
</reference>
<reference key="7">
    <citation type="journal article" date="2015" name="Proc. Natl. Acad. Sci. U.S.A.">
        <title>spenito is required for sex determination in Drosophila melanogaster.</title>
        <authorList>
            <person name="Yan D."/>
            <person name="Perrimon N."/>
        </authorList>
    </citation>
    <scope>FUNCTION</scope>
    <scope>SUBCELLULAR LOCATION</scope>
    <scope>DISRUPTION PHENOTYPE</scope>
    <scope>RNA-BINDING</scope>
    <scope>INTERACTION WITH SXL</scope>
</reference>
<reference key="8">
    <citation type="journal article" date="2016" name="Nature">
        <title>m(6)A modulates neuronal functions and sex determination in Drosophila.</title>
        <authorList>
            <person name="Lence T."/>
            <person name="Akhtar J."/>
            <person name="Bayer M."/>
            <person name="Schmid K."/>
            <person name="Spindler L."/>
            <person name="Ho C.H."/>
            <person name="Kreim N."/>
            <person name="Andrade-Navarro M.A."/>
            <person name="Poeck B."/>
            <person name="Helm M."/>
            <person name="Roignant J.Y."/>
        </authorList>
    </citation>
    <scope>FUNCTION</scope>
    <scope>RNA-BINDING</scope>
    <scope>IDENTIFICATION IN THE WMM COMPLEX</scope>
</reference>
<reference key="9">
    <citation type="journal article" date="2018" name="Genes Dev.">
        <title>Zc3h13/Flacc is required for adenosine methylation by bridging the mRNA-binding factor Rbm15/Spenito to the m6A machinery component Wtap/Fl(2)d.</title>
        <authorList>
            <person name="Knuckles P."/>
            <person name="Lence T."/>
            <person name="Haussmann I.U."/>
            <person name="Jacob D."/>
            <person name="Kreim N."/>
            <person name="Carl S.H."/>
            <person name="Masiello I."/>
            <person name="Hares T."/>
            <person name="Villasenor R."/>
            <person name="Hess D."/>
            <person name="Andrade-Navarro M.A."/>
            <person name="Biggiogera M."/>
            <person name="Helm M."/>
            <person name="Soller M."/>
            <person name="Buehler M."/>
            <person name="Roignant J.Y."/>
        </authorList>
    </citation>
    <scope>FUNCTION</scope>
    <scope>IDENTIFICATION IN THE WMM COMPLEX</scope>
</reference>
<reference key="10">
    <citation type="journal article" date="2017" name="Nat. Commun.">
        <title>The m6A pathway facilitates sex determination in Drosophila.</title>
        <authorList>
            <person name="Kan L."/>
            <person name="Grozhik A.V."/>
            <person name="Vedanayagam J."/>
            <person name="Patil D.P."/>
            <person name="Pang N."/>
            <person name="Lim K.S."/>
            <person name="Huang Y.C."/>
            <person name="Joseph B."/>
            <person name="Lin C.J."/>
            <person name="Despic V."/>
            <person name="Guo J."/>
            <person name="Yan D."/>
            <person name="Kondo S."/>
            <person name="Deng W.M."/>
            <person name="Dedon P.C."/>
            <person name="Jaffrey S.R."/>
            <person name="Lai E.C."/>
        </authorList>
    </citation>
    <scope>SUBCELLULAR LOCATION</scope>
    <scope>IDENTIFICATION IN THE WMM COMPLEX</scope>
</reference>
<reference key="11">
    <citation type="journal article" date="2018" name="Proc. Natl. Acad. Sci. U.S.A.">
        <title>Xio is a component of the Drosophila sex determination pathway and RNA N6-methyladenosine-methyladenosine methyltransferase complex.</title>
        <authorList>
            <person name="Guo J."/>
            <person name="Tang H.W."/>
            <person name="Li J."/>
            <person name="Perrimon N."/>
            <person name="Yan D."/>
        </authorList>
    </citation>
    <scope>FUNCTION</scope>
    <scope>IDENTIFICATION IN THE WMM COMPLEX</scope>
</reference>
<gene>
    <name evidence="13" type="primary">nito</name>
    <name evidence="13" type="ORF">CG2910</name>
</gene>
<organism>
    <name type="scientific">Drosophila melanogaster</name>
    <name type="common">Fruit fly</name>
    <dbReference type="NCBI Taxonomy" id="7227"/>
    <lineage>
        <taxon>Eukaryota</taxon>
        <taxon>Metazoa</taxon>
        <taxon>Ecdysozoa</taxon>
        <taxon>Arthropoda</taxon>
        <taxon>Hexapoda</taxon>
        <taxon>Insecta</taxon>
        <taxon>Pterygota</taxon>
        <taxon>Neoptera</taxon>
        <taxon>Endopterygota</taxon>
        <taxon>Diptera</taxon>
        <taxon>Brachycera</taxon>
        <taxon>Muscomorpha</taxon>
        <taxon>Ephydroidea</taxon>
        <taxon>Drosophilidae</taxon>
        <taxon>Drosophila</taxon>
        <taxon>Sophophora</taxon>
    </lineage>
</organism>
<name>NITO_DROME</name>
<dbReference type="EMBL" id="AE013599">
    <property type="protein sequence ID" value="AAF59160.1"/>
    <property type="molecule type" value="Genomic_DNA"/>
</dbReference>
<dbReference type="EMBL" id="AE013599">
    <property type="protein sequence ID" value="AAM68878.1"/>
    <property type="molecule type" value="Genomic_DNA"/>
</dbReference>
<dbReference type="EMBL" id="AE013599">
    <property type="protein sequence ID" value="AHN55972.1"/>
    <property type="molecule type" value="Genomic_DNA"/>
</dbReference>
<dbReference type="EMBL" id="AF145664">
    <property type="protein sequence ID" value="AAD38639.1"/>
    <property type="molecule type" value="mRNA"/>
</dbReference>
<dbReference type="EMBL" id="AY069434">
    <property type="protein sequence ID" value="AAL39579.1"/>
    <property type="status" value="ALT_INIT"/>
    <property type="molecule type" value="mRNA"/>
</dbReference>
<dbReference type="RefSeq" id="NP_001286174.1">
    <property type="nucleotide sequence ID" value="NM_001299245.1"/>
</dbReference>
<dbReference type="RefSeq" id="NP_610339.1">
    <property type="nucleotide sequence ID" value="NM_136495.3"/>
</dbReference>
<dbReference type="RefSeq" id="NP_724633.1">
    <property type="nucleotide sequence ID" value="NM_165579.2"/>
</dbReference>
<dbReference type="SMR" id="Q7KMJ6"/>
<dbReference type="ComplexPortal" id="CPX-2344">
    <property type="entry name" value="N6-methyladenosine methyltransferase complex"/>
</dbReference>
<dbReference type="FunCoup" id="Q7KMJ6">
    <property type="interactions" value="1630"/>
</dbReference>
<dbReference type="IntAct" id="Q7KMJ6">
    <property type="interactions" value="73"/>
</dbReference>
<dbReference type="STRING" id="7227.FBpp0087933"/>
<dbReference type="GlyGen" id="Q7KMJ6">
    <property type="glycosylation" value="2 sites"/>
</dbReference>
<dbReference type="PaxDb" id="7227-FBpp0087934"/>
<dbReference type="EnsemblMetazoa" id="FBtr0088857">
    <property type="protein sequence ID" value="FBpp0087933"/>
    <property type="gene ID" value="FBgn0027548"/>
</dbReference>
<dbReference type="EnsemblMetazoa" id="FBtr0088858">
    <property type="protein sequence ID" value="FBpp0087934"/>
    <property type="gene ID" value="FBgn0027548"/>
</dbReference>
<dbReference type="EnsemblMetazoa" id="FBtr0339122">
    <property type="protein sequence ID" value="FBpp0308267"/>
    <property type="gene ID" value="FBgn0027548"/>
</dbReference>
<dbReference type="GeneID" id="35756"/>
<dbReference type="KEGG" id="dme:Dmel_CG2910"/>
<dbReference type="UCSC" id="CG2910-RA">
    <property type="organism name" value="d. melanogaster"/>
</dbReference>
<dbReference type="AGR" id="FB:FBgn0027548"/>
<dbReference type="CTD" id="35756"/>
<dbReference type="FlyBase" id="FBgn0027548">
    <property type="gene designation" value="nito"/>
</dbReference>
<dbReference type="VEuPathDB" id="VectorBase:FBgn0027548"/>
<dbReference type="eggNOG" id="KOG0112">
    <property type="taxonomic scope" value="Eukaryota"/>
</dbReference>
<dbReference type="GeneTree" id="ENSGT00940000172749"/>
<dbReference type="HOGENOM" id="CLU_012724_1_0_1"/>
<dbReference type="InParanoid" id="Q7KMJ6"/>
<dbReference type="OMA" id="EWPNPAI"/>
<dbReference type="OrthoDB" id="10050565at2759"/>
<dbReference type="PhylomeDB" id="Q7KMJ6"/>
<dbReference type="SignaLink" id="Q7KMJ6"/>
<dbReference type="BioGRID-ORCS" id="35756">
    <property type="hits" value="0 hits in 3 CRISPR screens"/>
</dbReference>
<dbReference type="GenomeRNAi" id="35756"/>
<dbReference type="PRO" id="PR:Q7KMJ6"/>
<dbReference type="Proteomes" id="UP000000803">
    <property type="component" value="Chromosome 2R"/>
</dbReference>
<dbReference type="Bgee" id="FBgn0027548">
    <property type="expression patterns" value="Expressed in eye disc (Drosophila) and 136 other cell types or tissues"/>
</dbReference>
<dbReference type="GO" id="GO:0005634">
    <property type="term" value="C:nucleus"/>
    <property type="evidence" value="ECO:0000314"/>
    <property type="project" value="FlyBase"/>
</dbReference>
<dbReference type="GO" id="GO:0071011">
    <property type="term" value="C:precatalytic spliceosome"/>
    <property type="evidence" value="ECO:0007005"/>
    <property type="project" value="FlyBase"/>
</dbReference>
<dbReference type="GO" id="GO:0036396">
    <property type="term" value="C:RNA N6-methyladenosine methyltransferase complex"/>
    <property type="evidence" value="ECO:0000314"/>
    <property type="project" value="UniProtKB"/>
</dbReference>
<dbReference type="GO" id="GO:0003729">
    <property type="term" value="F:mRNA binding"/>
    <property type="evidence" value="ECO:0000318"/>
    <property type="project" value="GO_Central"/>
</dbReference>
<dbReference type="GO" id="GO:0003723">
    <property type="term" value="F:RNA binding"/>
    <property type="evidence" value="ECO:0000250"/>
    <property type="project" value="FlyBase"/>
</dbReference>
<dbReference type="GO" id="GO:0030154">
    <property type="term" value="P:cell differentiation"/>
    <property type="evidence" value="ECO:0007669"/>
    <property type="project" value="UniProtKB-KW"/>
</dbReference>
<dbReference type="GO" id="GO:0048749">
    <property type="term" value="P:compound eye development"/>
    <property type="evidence" value="ECO:0000315"/>
    <property type="project" value="FlyBase"/>
</dbReference>
<dbReference type="GO" id="GO:0000398">
    <property type="term" value="P:mRNA splicing, via spliceosome"/>
    <property type="evidence" value="ECO:0000305"/>
    <property type="project" value="FlyBase"/>
</dbReference>
<dbReference type="GO" id="GO:2000737">
    <property type="term" value="P:negative regulation of stem cell differentiation"/>
    <property type="evidence" value="ECO:0000315"/>
    <property type="project" value="FlyBase"/>
</dbReference>
<dbReference type="GO" id="GO:0090263">
    <property type="term" value="P:positive regulation of canonical Wnt signaling pathway"/>
    <property type="evidence" value="ECO:0000316"/>
    <property type="project" value="FlyBase"/>
</dbReference>
<dbReference type="GO" id="GO:0010628">
    <property type="term" value="P:positive regulation of gene expression"/>
    <property type="evidence" value="ECO:0000316"/>
    <property type="project" value="FlyBase"/>
</dbReference>
<dbReference type="GO" id="GO:0000381">
    <property type="term" value="P:regulation of alternative mRNA splicing, via spliceosome"/>
    <property type="evidence" value="ECO:0000315"/>
    <property type="project" value="FlyBase"/>
</dbReference>
<dbReference type="GO" id="GO:0007548">
    <property type="term" value="P:sex differentiation"/>
    <property type="evidence" value="ECO:0007669"/>
    <property type="project" value="UniProtKB-KW"/>
</dbReference>
<dbReference type="GO" id="GO:0035222">
    <property type="term" value="P:wing disc pattern formation"/>
    <property type="evidence" value="ECO:0000315"/>
    <property type="project" value="FlyBase"/>
</dbReference>
<dbReference type="CDD" id="cd12308">
    <property type="entry name" value="RRM1_Spen"/>
    <property type="match status" value="1"/>
</dbReference>
<dbReference type="CDD" id="cd12309">
    <property type="entry name" value="RRM2_Spen"/>
    <property type="match status" value="1"/>
</dbReference>
<dbReference type="CDD" id="cd12310">
    <property type="entry name" value="RRM3_Spen"/>
    <property type="match status" value="1"/>
</dbReference>
<dbReference type="CDD" id="cd21544">
    <property type="entry name" value="SPOC_RBM15-like"/>
    <property type="match status" value="1"/>
</dbReference>
<dbReference type="FunFam" id="2.40.290.10:FF:000007">
    <property type="entry name" value="RNA-binding protein 15B"/>
    <property type="match status" value="1"/>
</dbReference>
<dbReference type="FunFam" id="3.30.70.330:FF:000454">
    <property type="entry name" value="RNA-binding protein 15B"/>
    <property type="match status" value="1"/>
</dbReference>
<dbReference type="FunFam" id="3.30.70.330:FF:000565">
    <property type="entry name" value="RNA-binding protein 15B"/>
    <property type="match status" value="1"/>
</dbReference>
<dbReference type="Gene3D" id="2.40.290.10">
    <property type="match status" value="1"/>
</dbReference>
<dbReference type="Gene3D" id="3.30.70.330">
    <property type="match status" value="3"/>
</dbReference>
<dbReference type="InterPro" id="IPR012677">
    <property type="entry name" value="Nucleotide-bd_a/b_plait_sf"/>
</dbReference>
<dbReference type="InterPro" id="IPR035979">
    <property type="entry name" value="RBD_domain_sf"/>
</dbReference>
<dbReference type="InterPro" id="IPR000504">
    <property type="entry name" value="RRM_dom"/>
</dbReference>
<dbReference type="InterPro" id="IPR016194">
    <property type="entry name" value="SPOC-like_C_dom_sf"/>
</dbReference>
<dbReference type="InterPro" id="IPR012921">
    <property type="entry name" value="SPOC_C"/>
</dbReference>
<dbReference type="InterPro" id="IPR010912">
    <property type="entry name" value="SPOC_met"/>
</dbReference>
<dbReference type="PANTHER" id="PTHR23189">
    <property type="entry name" value="RNA RECOGNITION MOTIF-CONTAINING"/>
    <property type="match status" value="1"/>
</dbReference>
<dbReference type="Pfam" id="PF00076">
    <property type="entry name" value="RRM_1"/>
    <property type="match status" value="2"/>
</dbReference>
<dbReference type="Pfam" id="PF07744">
    <property type="entry name" value="SPOC"/>
    <property type="match status" value="1"/>
</dbReference>
<dbReference type="SMART" id="SM00360">
    <property type="entry name" value="RRM"/>
    <property type="match status" value="3"/>
</dbReference>
<dbReference type="SUPFAM" id="SSF54928">
    <property type="entry name" value="RNA-binding domain, RBD"/>
    <property type="match status" value="2"/>
</dbReference>
<dbReference type="SUPFAM" id="SSF100939">
    <property type="entry name" value="SPOC domain-like"/>
    <property type="match status" value="1"/>
</dbReference>
<dbReference type="PROSITE" id="PS50102">
    <property type="entry name" value="RRM"/>
    <property type="match status" value="2"/>
</dbReference>
<dbReference type="PROSITE" id="PS50917">
    <property type="entry name" value="SPOC"/>
    <property type="match status" value="1"/>
</dbReference>
<feature type="chain" id="PRO_0000444612" description="RNA-binding protein spenito">
    <location>
        <begin position="1"/>
        <end position="793"/>
    </location>
</feature>
<feature type="domain" description="RRM 1" evidence="1">
    <location>
        <begin position="314"/>
        <end position="391"/>
    </location>
</feature>
<feature type="domain" description="RRM 2" evidence="1">
    <location>
        <begin position="395"/>
        <end position="469"/>
    </location>
</feature>
<feature type="domain" description="SPOC" evidence="2">
    <location>
        <begin position="624"/>
        <end position="791"/>
    </location>
</feature>
<feature type="region of interest" description="Disordered" evidence="3">
    <location>
        <begin position="1"/>
        <end position="93"/>
    </location>
</feature>
<feature type="region of interest" description="Disordered" evidence="3">
    <location>
        <begin position="243"/>
        <end position="296"/>
    </location>
</feature>
<feature type="region of interest" description="Disordered" evidence="3">
    <location>
        <begin position="507"/>
        <end position="623"/>
    </location>
</feature>
<feature type="compositionally biased region" description="Low complexity" evidence="3">
    <location>
        <begin position="25"/>
        <end position="42"/>
    </location>
</feature>
<feature type="compositionally biased region" description="Basic residues" evidence="3">
    <location>
        <begin position="257"/>
        <end position="268"/>
    </location>
</feature>
<feature type="compositionally biased region" description="Basic and acidic residues" evidence="3">
    <location>
        <begin position="285"/>
        <end position="296"/>
    </location>
</feature>
<feature type="compositionally biased region" description="Basic residues" evidence="3">
    <location>
        <begin position="526"/>
        <end position="536"/>
    </location>
</feature>
<feature type="compositionally biased region" description="Basic and acidic residues" evidence="3">
    <location>
        <begin position="566"/>
        <end position="593"/>
    </location>
</feature>
<feature type="mutagenesis site" description="Decreased phosphorylation by Hipk." evidence="6">
    <original>SASRS</original>
    <variation>AAARA</variation>
    <location>
        <begin position="23"/>
        <end position="27"/>
    </location>
</feature>
<feature type="mutagenesis site" description="Does not affect phosphorylation by Hipk." evidence="6">
    <original>SRSSLS</original>
    <variation>ARAALA</variation>
    <location>
        <begin position="32"/>
        <end position="37"/>
    </location>
</feature>
<keyword id="KW-0217">Developmental protein</keyword>
<keyword id="KW-0221">Differentiation</keyword>
<keyword id="KW-0507">mRNA processing</keyword>
<keyword id="KW-0508">mRNA splicing</keyword>
<keyword id="KW-0539">Nucleus</keyword>
<keyword id="KW-0597">Phosphoprotein</keyword>
<keyword id="KW-1185">Reference proteome</keyword>
<keyword id="KW-0694">RNA-binding</keyword>
<keyword id="KW-0726">Sexual differentiation</keyword>
<evidence type="ECO:0000255" key="1">
    <source>
        <dbReference type="PROSITE-ProRule" id="PRU00176"/>
    </source>
</evidence>
<evidence type="ECO:0000255" key="2">
    <source>
        <dbReference type="PROSITE-ProRule" id="PRU00249"/>
    </source>
</evidence>
<evidence type="ECO:0000256" key="3">
    <source>
        <dbReference type="SAM" id="MobiDB-lite"/>
    </source>
</evidence>
<evidence type="ECO:0000269" key="4">
    <source>
    </source>
</evidence>
<evidence type="ECO:0000269" key="5">
    <source>
    </source>
</evidence>
<evidence type="ECO:0000269" key="6">
    <source>
    </source>
</evidence>
<evidence type="ECO:0000269" key="7">
    <source>
    </source>
</evidence>
<evidence type="ECO:0000269" key="8">
    <source>
    </source>
</evidence>
<evidence type="ECO:0000269" key="9">
    <source>
    </source>
</evidence>
<evidence type="ECO:0000269" key="10">
    <source>
    </source>
</evidence>
<evidence type="ECO:0000269" key="11">
    <source>
    </source>
</evidence>
<evidence type="ECO:0000305" key="12"/>
<evidence type="ECO:0000312" key="13">
    <source>
        <dbReference type="FlyBase" id="FBgn0027548"/>
    </source>
</evidence>